<dbReference type="EMBL" id="CR626927">
    <property type="protein sequence ID" value="CAH09694.1"/>
    <property type="molecule type" value="Genomic_DNA"/>
</dbReference>
<dbReference type="RefSeq" id="WP_005782161.1">
    <property type="nucleotide sequence ID" value="NZ_UFTH01000001.1"/>
</dbReference>
<dbReference type="SMR" id="Q5L894"/>
<dbReference type="PaxDb" id="272559-BF9343_3913"/>
<dbReference type="GeneID" id="93105338"/>
<dbReference type="KEGG" id="bfs:BF9343_3913"/>
<dbReference type="eggNOG" id="COG0081">
    <property type="taxonomic scope" value="Bacteria"/>
</dbReference>
<dbReference type="HOGENOM" id="CLU_062853_0_0_10"/>
<dbReference type="Proteomes" id="UP000006731">
    <property type="component" value="Chromosome"/>
</dbReference>
<dbReference type="GO" id="GO:0015934">
    <property type="term" value="C:large ribosomal subunit"/>
    <property type="evidence" value="ECO:0007669"/>
    <property type="project" value="InterPro"/>
</dbReference>
<dbReference type="GO" id="GO:0019843">
    <property type="term" value="F:rRNA binding"/>
    <property type="evidence" value="ECO:0007669"/>
    <property type="project" value="UniProtKB-UniRule"/>
</dbReference>
<dbReference type="GO" id="GO:0003735">
    <property type="term" value="F:structural constituent of ribosome"/>
    <property type="evidence" value="ECO:0007669"/>
    <property type="project" value="InterPro"/>
</dbReference>
<dbReference type="GO" id="GO:0000049">
    <property type="term" value="F:tRNA binding"/>
    <property type="evidence" value="ECO:0007669"/>
    <property type="project" value="UniProtKB-KW"/>
</dbReference>
<dbReference type="GO" id="GO:0006417">
    <property type="term" value="P:regulation of translation"/>
    <property type="evidence" value="ECO:0007669"/>
    <property type="project" value="UniProtKB-KW"/>
</dbReference>
<dbReference type="GO" id="GO:0006412">
    <property type="term" value="P:translation"/>
    <property type="evidence" value="ECO:0007669"/>
    <property type="project" value="UniProtKB-UniRule"/>
</dbReference>
<dbReference type="CDD" id="cd00403">
    <property type="entry name" value="Ribosomal_L1"/>
    <property type="match status" value="1"/>
</dbReference>
<dbReference type="FunFam" id="3.40.50.790:FF:000001">
    <property type="entry name" value="50S ribosomal protein L1"/>
    <property type="match status" value="1"/>
</dbReference>
<dbReference type="Gene3D" id="3.30.190.20">
    <property type="match status" value="1"/>
</dbReference>
<dbReference type="Gene3D" id="3.40.50.790">
    <property type="match status" value="1"/>
</dbReference>
<dbReference type="HAMAP" id="MF_01318_B">
    <property type="entry name" value="Ribosomal_uL1_B"/>
    <property type="match status" value="1"/>
</dbReference>
<dbReference type="InterPro" id="IPR005878">
    <property type="entry name" value="Ribosom_uL1_bac-type"/>
</dbReference>
<dbReference type="InterPro" id="IPR002143">
    <property type="entry name" value="Ribosomal_uL1"/>
</dbReference>
<dbReference type="InterPro" id="IPR023674">
    <property type="entry name" value="Ribosomal_uL1-like"/>
</dbReference>
<dbReference type="InterPro" id="IPR028364">
    <property type="entry name" value="Ribosomal_uL1/biogenesis"/>
</dbReference>
<dbReference type="InterPro" id="IPR016095">
    <property type="entry name" value="Ribosomal_uL1_3-a/b-sand"/>
</dbReference>
<dbReference type="InterPro" id="IPR023673">
    <property type="entry name" value="Ribosomal_uL1_CS"/>
</dbReference>
<dbReference type="NCBIfam" id="TIGR01169">
    <property type="entry name" value="rplA_bact"/>
    <property type="match status" value="1"/>
</dbReference>
<dbReference type="PANTHER" id="PTHR36427">
    <property type="entry name" value="54S RIBOSOMAL PROTEIN L1, MITOCHONDRIAL"/>
    <property type="match status" value="1"/>
</dbReference>
<dbReference type="PANTHER" id="PTHR36427:SF3">
    <property type="entry name" value="LARGE RIBOSOMAL SUBUNIT PROTEIN UL1M"/>
    <property type="match status" value="1"/>
</dbReference>
<dbReference type="Pfam" id="PF00687">
    <property type="entry name" value="Ribosomal_L1"/>
    <property type="match status" value="1"/>
</dbReference>
<dbReference type="PIRSF" id="PIRSF002155">
    <property type="entry name" value="Ribosomal_L1"/>
    <property type="match status" value="1"/>
</dbReference>
<dbReference type="SUPFAM" id="SSF56808">
    <property type="entry name" value="Ribosomal protein L1"/>
    <property type="match status" value="1"/>
</dbReference>
<dbReference type="PROSITE" id="PS01199">
    <property type="entry name" value="RIBOSOMAL_L1"/>
    <property type="match status" value="1"/>
</dbReference>
<comment type="function">
    <text evidence="1">Binds directly to 23S rRNA. The L1 stalk is quite mobile in the ribosome, and is involved in E site tRNA release.</text>
</comment>
<comment type="function">
    <text evidence="1">Protein L1 is also a translational repressor protein, it controls the translation of the L11 operon by binding to its mRNA.</text>
</comment>
<comment type="subunit">
    <text evidence="1">Part of the 50S ribosomal subunit.</text>
</comment>
<comment type="similarity">
    <text evidence="1">Belongs to the universal ribosomal protein uL1 family.</text>
</comment>
<name>RL1_BACFN</name>
<protein>
    <recommendedName>
        <fullName evidence="1">Large ribosomal subunit protein uL1</fullName>
    </recommendedName>
    <alternativeName>
        <fullName evidence="2">50S ribosomal protein L1</fullName>
    </alternativeName>
</protein>
<organism>
    <name type="scientific">Bacteroides fragilis (strain ATCC 25285 / DSM 2151 / CCUG 4856 / JCM 11019 / LMG 10263 / NCTC 9343 / Onslow / VPI 2553 / EN-2)</name>
    <dbReference type="NCBI Taxonomy" id="272559"/>
    <lineage>
        <taxon>Bacteria</taxon>
        <taxon>Pseudomonadati</taxon>
        <taxon>Bacteroidota</taxon>
        <taxon>Bacteroidia</taxon>
        <taxon>Bacteroidales</taxon>
        <taxon>Bacteroidaceae</taxon>
        <taxon>Bacteroides</taxon>
    </lineage>
</organism>
<proteinExistence type="inferred from homology"/>
<accession>Q5L894</accession>
<evidence type="ECO:0000255" key="1">
    <source>
        <dbReference type="HAMAP-Rule" id="MF_01318"/>
    </source>
</evidence>
<evidence type="ECO:0000305" key="2"/>
<sequence length="232" mass="24834">MGKLTKNQKLAAGKIEAGKAYSLKEAASLVKEITFTKFDASLDIDVRLGVDPRKANQMVRGVVSLPHGTGKQVRVLVLCTPDAEAAAKEAGADYVGLDEYIEKIKGGWTDIDVIITMPSIMGKIGALGRVLGPRGLMPNPKSGTVTMDVAKAVREVKQGKIDFKVDKSGIVHTSIGKVSFTAEQIRDNAKEFISTLNKLKPTAAKGTYIKSIYLSSTMSAGIKIDPKSVEEI</sequence>
<reference key="1">
    <citation type="journal article" date="2005" name="Science">
        <title>Extensive DNA inversions in the B. fragilis genome control variable gene expression.</title>
        <authorList>
            <person name="Cerdeno-Tarraga A.-M."/>
            <person name="Patrick S."/>
            <person name="Crossman L.C."/>
            <person name="Blakely G."/>
            <person name="Abratt V."/>
            <person name="Lennard N."/>
            <person name="Poxton I."/>
            <person name="Duerden B."/>
            <person name="Harris B."/>
            <person name="Quail M.A."/>
            <person name="Barron A."/>
            <person name="Clark L."/>
            <person name="Corton C."/>
            <person name="Doggett J."/>
            <person name="Holden M.T.G."/>
            <person name="Larke N."/>
            <person name="Line A."/>
            <person name="Lord A."/>
            <person name="Norbertczak H."/>
            <person name="Ormond D."/>
            <person name="Price C."/>
            <person name="Rabbinowitsch E."/>
            <person name="Woodward J."/>
            <person name="Barrell B.G."/>
            <person name="Parkhill J."/>
        </authorList>
    </citation>
    <scope>NUCLEOTIDE SEQUENCE [LARGE SCALE GENOMIC DNA]</scope>
    <source>
        <strain>ATCC 25285 / DSM 2151 / CCUG 4856 / JCM 11019 / LMG 10263 / NCTC 9343 / Onslow / VPI 2553 / EN-2</strain>
    </source>
</reference>
<keyword id="KW-0678">Repressor</keyword>
<keyword id="KW-0687">Ribonucleoprotein</keyword>
<keyword id="KW-0689">Ribosomal protein</keyword>
<keyword id="KW-0694">RNA-binding</keyword>
<keyword id="KW-0699">rRNA-binding</keyword>
<keyword id="KW-0810">Translation regulation</keyword>
<keyword id="KW-0820">tRNA-binding</keyword>
<gene>
    <name evidence="1" type="primary">rplA</name>
    <name type="ordered locus">BF4018</name>
</gene>
<feature type="chain" id="PRO_0000230591" description="Large ribosomal subunit protein uL1">
    <location>
        <begin position="1"/>
        <end position="232"/>
    </location>
</feature>